<accession>P77657</accession>
<accession>Q2MCE5</accession>
<organism>
    <name type="scientific">Escherichia coli (strain K12)</name>
    <dbReference type="NCBI Taxonomy" id="83333"/>
    <lineage>
        <taxon>Bacteria</taxon>
        <taxon>Pseudomonadati</taxon>
        <taxon>Pseudomonadota</taxon>
        <taxon>Gammaproteobacteria</taxon>
        <taxon>Enterobacterales</taxon>
        <taxon>Enterobacteriaceae</taxon>
        <taxon>Escherichia</taxon>
    </lineage>
</organism>
<gene>
    <name type="primary">yagK</name>
    <name type="ordered locus">b0277</name>
    <name type="ordered locus">JW0271</name>
</gene>
<feature type="chain" id="PRO_0000168557" description="Uncharacterized protein YagK">
    <location>
        <begin position="1"/>
        <end position="208"/>
    </location>
</feature>
<keyword id="KW-1185">Reference proteome</keyword>
<evidence type="ECO:0000305" key="1"/>
<comment type="similarity">
    <text evidence="1">To E.coli YfjJ.</text>
</comment>
<name>YAGK_ECOLI</name>
<reference key="1">
    <citation type="submission" date="1997-01" db="EMBL/GenBank/DDBJ databases">
        <title>Sequence of minutes 4-25 of Escherichia coli.</title>
        <authorList>
            <person name="Chung E."/>
            <person name="Allen E."/>
            <person name="Araujo R."/>
            <person name="Aparicio A.M."/>
            <person name="Davis K."/>
            <person name="Duncan M."/>
            <person name="Federspiel N."/>
            <person name="Hyman R."/>
            <person name="Kalman S."/>
            <person name="Komp C."/>
            <person name="Kurdi O."/>
            <person name="Lew H."/>
            <person name="Lin D."/>
            <person name="Namath A."/>
            <person name="Oefner P."/>
            <person name="Roberts D."/>
            <person name="Schramm S."/>
            <person name="Davis R.W."/>
        </authorList>
    </citation>
    <scope>NUCLEOTIDE SEQUENCE [LARGE SCALE GENOMIC DNA]</scope>
    <source>
        <strain>K12 / MG1655 / ATCC 47076</strain>
    </source>
</reference>
<reference key="2">
    <citation type="journal article" date="1997" name="Science">
        <title>The complete genome sequence of Escherichia coli K-12.</title>
        <authorList>
            <person name="Blattner F.R."/>
            <person name="Plunkett G. III"/>
            <person name="Bloch C.A."/>
            <person name="Perna N.T."/>
            <person name="Burland V."/>
            <person name="Riley M."/>
            <person name="Collado-Vides J."/>
            <person name="Glasner J.D."/>
            <person name="Rode C.K."/>
            <person name="Mayhew G.F."/>
            <person name="Gregor J."/>
            <person name="Davis N.W."/>
            <person name="Kirkpatrick H.A."/>
            <person name="Goeden M.A."/>
            <person name="Rose D.J."/>
            <person name="Mau B."/>
            <person name="Shao Y."/>
        </authorList>
    </citation>
    <scope>NUCLEOTIDE SEQUENCE [LARGE SCALE GENOMIC DNA]</scope>
    <source>
        <strain>K12 / MG1655 / ATCC 47076</strain>
    </source>
</reference>
<reference key="3">
    <citation type="journal article" date="2006" name="Mol. Syst. Biol.">
        <title>Highly accurate genome sequences of Escherichia coli K-12 strains MG1655 and W3110.</title>
        <authorList>
            <person name="Hayashi K."/>
            <person name="Morooka N."/>
            <person name="Yamamoto Y."/>
            <person name="Fujita K."/>
            <person name="Isono K."/>
            <person name="Choi S."/>
            <person name="Ohtsubo E."/>
            <person name="Baba T."/>
            <person name="Wanner B.L."/>
            <person name="Mori H."/>
            <person name="Horiuchi T."/>
        </authorList>
    </citation>
    <scope>NUCLEOTIDE SEQUENCE [LARGE SCALE GENOMIC DNA]</scope>
    <source>
        <strain>K12 / W3110 / ATCC 27325 / DSM 5911</strain>
    </source>
</reference>
<proteinExistence type="predicted"/>
<dbReference type="EMBL" id="U73857">
    <property type="protein sequence ID" value="AAB18006.1"/>
    <property type="molecule type" value="Genomic_DNA"/>
</dbReference>
<dbReference type="EMBL" id="U00096">
    <property type="protein sequence ID" value="AAC73380.1"/>
    <property type="molecule type" value="Genomic_DNA"/>
</dbReference>
<dbReference type="EMBL" id="AP009048">
    <property type="protein sequence ID" value="BAE76061.1"/>
    <property type="molecule type" value="Genomic_DNA"/>
</dbReference>
<dbReference type="PIR" id="E64753">
    <property type="entry name" value="E64753"/>
</dbReference>
<dbReference type="RefSeq" id="NP_414811.1">
    <property type="nucleotide sequence ID" value="NC_000913.3"/>
</dbReference>
<dbReference type="RefSeq" id="WP_000860996.1">
    <property type="nucleotide sequence ID" value="NZ_LN832404.1"/>
</dbReference>
<dbReference type="BioGRID" id="4259780">
    <property type="interactions" value="22"/>
</dbReference>
<dbReference type="FunCoup" id="P77657">
    <property type="interactions" value="55"/>
</dbReference>
<dbReference type="IntAct" id="P77657">
    <property type="interactions" value="9"/>
</dbReference>
<dbReference type="STRING" id="511145.b0277"/>
<dbReference type="PaxDb" id="511145-b0277"/>
<dbReference type="EnsemblBacteria" id="AAC73380">
    <property type="protein sequence ID" value="AAC73380"/>
    <property type="gene ID" value="b0277"/>
</dbReference>
<dbReference type="GeneID" id="945847"/>
<dbReference type="KEGG" id="ecj:JW0271"/>
<dbReference type="KEGG" id="eco:b0277"/>
<dbReference type="KEGG" id="ecoc:C3026_01340"/>
<dbReference type="PATRIC" id="fig|511145.12.peg.282"/>
<dbReference type="EchoBASE" id="EB3320"/>
<dbReference type="eggNOG" id="ENOG5032T6W">
    <property type="taxonomic scope" value="Bacteria"/>
</dbReference>
<dbReference type="HOGENOM" id="CLU_086947_0_0_6"/>
<dbReference type="InParanoid" id="P77657"/>
<dbReference type="OMA" id="GVDAGCY"/>
<dbReference type="OrthoDB" id="5701642at2"/>
<dbReference type="PhylomeDB" id="P77657"/>
<dbReference type="BioCyc" id="EcoCyc:G6148-MONOMER"/>
<dbReference type="PRO" id="PR:P77657"/>
<dbReference type="Proteomes" id="UP000000625">
    <property type="component" value="Chromosome"/>
</dbReference>
<dbReference type="Pfam" id="PF11726">
    <property type="entry name" value="YagK_YfjJ_C"/>
    <property type="match status" value="1"/>
</dbReference>
<sequence>MKTYQGTHGVHILEYQSKINKLLCYLTNRYPRLIAVRVDLHYPKIVDNGDNICCFPNLEPGVISRMRESLRAKLEADRTRKVREDKRIYRCPLFIIWAKEYSESGKCHYHICLLFNKDAYYHLGDYDQDDNLRGMITGAWYSALRLERDDHPGLVHFPENCKYVLDTNSTDFQQNYQALLTRLDYLTKVESKVFGEGDRNFGCSQIEL</sequence>
<protein>
    <recommendedName>
        <fullName>Uncharacterized protein YagK</fullName>
    </recommendedName>
</protein>